<proteinExistence type="inferred from homology"/>
<gene>
    <name evidence="1" type="primary">ureC</name>
    <name type="ordered locus">SaurJH9_2314</name>
</gene>
<organism>
    <name type="scientific">Staphylococcus aureus (strain JH9)</name>
    <dbReference type="NCBI Taxonomy" id="359786"/>
    <lineage>
        <taxon>Bacteria</taxon>
        <taxon>Bacillati</taxon>
        <taxon>Bacillota</taxon>
        <taxon>Bacilli</taxon>
        <taxon>Bacillales</taxon>
        <taxon>Staphylococcaceae</taxon>
        <taxon>Staphylococcus</taxon>
    </lineage>
</organism>
<evidence type="ECO:0000255" key="1">
    <source>
        <dbReference type="HAMAP-Rule" id="MF_01953"/>
    </source>
</evidence>
<sequence length="571" mass="61766">MSFKMTQNQYTSLYGPTVGDSIRLGDTNLFAQIEKDYAVYGEEATFGGGKSIRDGMAQNPRVTRDDVNVADLVISNAVIIDYDKVVKADIGIKNGYIFAIGNAGNPDIMDNVDIIIGSTTDIIAAEGKIVTAGGIDTHVHFINPEQAEVALESGITTHIGGGTGASEGSKATTVTPGPWHIHRMLEAAEGLPINVGFTGKGQATNPTALIEQINAGAIGLKVHEDWGATPSALSHALDVADEFDVQIALHADTLNEAGFMEDTMAAVKDRVLHMYHTEGAGGGHAPDLIKSAAFSNILPSSTNPTLPYTHNTVDEHLDMVMITHHLNAAIPEDIAFADSRIRKETIAAEDVLQDMGVFSMISSDSQAMGRVGEVITRTWQVAHRMKEQRGPLDGDFEHNDNNRIKRYIAKYTINPAITHGISEYVGSIEPGKLADIVLWDPIFFGVKPELVVKGGLINSAVNGDANGSIPTSEPMKYRKMYGQYGGNLTSTSMTFVSKTAYENGINRALNLKRMVRPVKNIRQLSKADMKNNSATPKLDVDPQTYEVYVDGENITSNAATELPLTQRYFLF</sequence>
<reference key="1">
    <citation type="submission" date="2007-05" db="EMBL/GenBank/DDBJ databases">
        <title>Complete sequence of chromosome of Staphylococcus aureus subsp. aureus JH9.</title>
        <authorList>
            <consortium name="US DOE Joint Genome Institute"/>
            <person name="Copeland A."/>
            <person name="Lucas S."/>
            <person name="Lapidus A."/>
            <person name="Barry K."/>
            <person name="Detter J.C."/>
            <person name="Glavina del Rio T."/>
            <person name="Hammon N."/>
            <person name="Israni S."/>
            <person name="Pitluck S."/>
            <person name="Chain P."/>
            <person name="Malfatti S."/>
            <person name="Shin M."/>
            <person name="Vergez L."/>
            <person name="Schmutz J."/>
            <person name="Larimer F."/>
            <person name="Land M."/>
            <person name="Hauser L."/>
            <person name="Kyrpides N."/>
            <person name="Kim E."/>
            <person name="Tomasz A."/>
            <person name="Richardson P."/>
        </authorList>
    </citation>
    <scope>NUCLEOTIDE SEQUENCE [LARGE SCALE GENOMIC DNA]</scope>
    <source>
        <strain>JH9</strain>
    </source>
</reference>
<keyword id="KW-0963">Cytoplasm</keyword>
<keyword id="KW-0378">Hydrolase</keyword>
<keyword id="KW-0479">Metal-binding</keyword>
<keyword id="KW-0533">Nickel</keyword>
<protein>
    <recommendedName>
        <fullName evidence="1">Urease subunit alpha</fullName>
        <ecNumber evidence="1">3.5.1.5</ecNumber>
    </recommendedName>
    <alternativeName>
        <fullName evidence="1">Urea amidohydrolase subunit alpha</fullName>
    </alternativeName>
</protein>
<feature type="chain" id="PRO_1000088499" description="Urease subunit alpha">
    <location>
        <begin position="1"/>
        <end position="571"/>
    </location>
</feature>
<feature type="active site" description="Proton donor" evidence="1">
    <location>
        <position position="324"/>
    </location>
</feature>
<feature type="binding site" evidence="1">
    <location>
        <position position="138"/>
    </location>
    <ligand>
        <name>Ni(2+)</name>
        <dbReference type="ChEBI" id="CHEBI:49786"/>
        <label>1</label>
    </ligand>
</feature>
<feature type="binding site" evidence="1">
    <location>
        <position position="140"/>
    </location>
    <ligand>
        <name>Ni(2+)</name>
        <dbReference type="ChEBI" id="CHEBI:49786"/>
        <label>1</label>
    </ligand>
</feature>
<feature type="binding site" description="via carbamate group" evidence="1">
    <location>
        <position position="221"/>
    </location>
    <ligand>
        <name>Ni(2+)</name>
        <dbReference type="ChEBI" id="CHEBI:49786"/>
        <label>1</label>
    </ligand>
</feature>
<feature type="binding site" description="via carbamate group" evidence="1">
    <location>
        <position position="221"/>
    </location>
    <ligand>
        <name>Ni(2+)</name>
        <dbReference type="ChEBI" id="CHEBI:49786"/>
        <label>2</label>
    </ligand>
</feature>
<feature type="binding site" evidence="1">
    <location>
        <position position="223"/>
    </location>
    <ligand>
        <name>substrate</name>
    </ligand>
</feature>
<feature type="binding site" evidence="1">
    <location>
        <position position="250"/>
    </location>
    <ligand>
        <name>Ni(2+)</name>
        <dbReference type="ChEBI" id="CHEBI:49786"/>
        <label>2</label>
    </ligand>
</feature>
<feature type="binding site" evidence="1">
    <location>
        <position position="276"/>
    </location>
    <ligand>
        <name>Ni(2+)</name>
        <dbReference type="ChEBI" id="CHEBI:49786"/>
        <label>2</label>
    </ligand>
</feature>
<feature type="binding site" evidence="1">
    <location>
        <position position="364"/>
    </location>
    <ligand>
        <name>Ni(2+)</name>
        <dbReference type="ChEBI" id="CHEBI:49786"/>
        <label>1</label>
    </ligand>
</feature>
<feature type="modified residue" description="N6-carboxylysine" evidence="1">
    <location>
        <position position="221"/>
    </location>
</feature>
<comment type="catalytic activity">
    <reaction evidence="1">
        <text>urea + 2 H2O + H(+) = hydrogencarbonate + 2 NH4(+)</text>
        <dbReference type="Rhea" id="RHEA:20557"/>
        <dbReference type="ChEBI" id="CHEBI:15377"/>
        <dbReference type="ChEBI" id="CHEBI:15378"/>
        <dbReference type="ChEBI" id="CHEBI:16199"/>
        <dbReference type="ChEBI" id="CHEBI:17544"/>
        <dbReference type="ChEBI" id="CHEBI:28938"/>
        <dbReference type="EC" id="3.5.1.5"/>
    </reaction>
</comment>
<comment type="cofactor">
    <cofactor evidence="1">
        <name>Ni cation</name>
        <dbReference type="ChEBI" id="CHEBI:25516"/>
    </cofactor>
    <text evidence="1">Binds 2 nickel ions per subunit.</text>
</comment>
<comment type="pathway">
    <text evidence="1">Nitrogen metabolism; urea degradation; CO(2) and NH(3) from urea (urease route): step 1/1.</text>
</comment>
<comment type="subunit">
    <text evidence="1">Heterotrimer of UreA (gamma), UreB (beta) and UreC (alpha) subunits. Three heterotrimers associate to form the active enzyme.</text>
</comment>
<comment type="subcellular location">
    <subcellularLocation>
        <location evidence="1">Cytoplasm</location>
    </subcellularLocation>
</comment>
<comment type="PTM">
    <text evidence="1">Carboxylation allows a single lysine to coordinate two nickel ions.</text>
</comment>
<comment type="similarity">
    <text evidence="1">Belongs to the metallo-dependent hydrolases superfamily. Urease alpha subunit family.</text>
</comment>
<dbReference type="EC" id="3.5.1.5" evidence="1"/>
<dbReference type="EMBL" id="CP000703">
    <property type="protein sequence ID" value="ABQ50094.1"/>
    <property type="molecule type" value="Genomic_DNA"/>
</dbReference>
<dbReference type="RefSeq" id="WP_000008677.1">
    <property type="nucleotide sequence ID" value="NC_009487.1"/>
</dbReference>
<dbReference type="SMR" id="A5IV71"/>
<dbReference type="MEROPS" id="M38.982"/>
<dbReference type="KEGG" id="saj:SaurJH9_2314"/>
<dbReference type="HOGENOM" id="CLU_000980_0_0_9"/>
<dbReference type="UniPathway" id="UPA00258">
    <property type="reaction ID" value="UER00370"/>
</dbReference>
<dbReference type="GO" id="GO:0005737">
    <property type="term" value="C:cytoplasm"/>
    <property type="evidence" value="ECO:0007669"/>
    <property type="project" value="UniProtKB-SubCell"/>
</dbReference>
<dbReference type="GO" id="GO:0016151">
    <property type="term" value="F:nickel cation binding"/>
    <property type="evidence" value="ECO:0007669"/>
    <property type="project" value="UniProtKB-UniRule"/>
</dbReference>
<dbReference type="GO" id="GO:0009039">
    <property type="term" value="F:urease activity"/>
    <property type="evidence" value="ECO:0007669"/>
    <property type="project" value="UniProtKB-UniRule"/>
</dbReference>
<dbReference type="GO" id="GO:0043419">
    <property type="term" value="P:urea catabolic process"/>
    <property type="evidence" value="ECO:0007669"/>
    <property type="project" value="UniProtKB-UniRule"/>
</dbReference>
<dbReference type="CDD" id="cd00375">
    <property type="entry name" value="Urease_alpha"/>
    <property type="match status" value="1"/>
</dbReference>
<dbReference type="Gene3D" id="3.20.20.140">
    <property type="entry name" value="Metal-dependent hydrolases"/>
    <property type="match status" value="1"/>
</dbReference>
<dbReference type="Gene3D" id="2.30.40.10">
    <property type="entry name" value="Urease, subunit C, domain 1"/>
    <property type="match status" value="1"/>
</dbReference>
<dbReference type="HAMAP" id="MF_01953">
    <property type="entry name" value="Urease_alpha"/>
    <property type="match status" value="1"/>
</dbReference>
<dbReference type="InterPro" id="IPR006680">
    <property type="entry name" value="Amidohydro-rel"/>
</dbReference>
<dbReference type="InterPro" id="IPR011059">
    <property type="entry name" value="Metal-dep_hydrolase_composite"/>
</dbReference>
<dbReference type="InterPro" id="IPR032466">
    <property type="entry name" value="Metal_Hydrolase"/>
</dbReference>
<dbReference type="InterPro" id="IPR011612">
    <property type="entry name" value="Urease_alpha_N_dom"/>
</dbReference>
<dbReference type="InterPro" id="IPR050112">
    <property type="entry name" value="Urease_alpha_subunit"/>
</dbReference>
<dbReference type="InterPro" id="IPR017950">
    <property type="entry name" value="Urease_AS"/>
</dbReference>
<dbReference type="InterPro" id="IPR005848">
    <property type="entry name" value="Urease_asu"/>
</dbReference>
<dbReference type="InterPro" id="IPR017951">
    <property type="entry name" value="Urease_asu_c"/>
</dbReference>
<dbReference type="InterPro" id="IPR029754">
    <property type="entry name" value="Urease_Ni-bd"/>
</dbReference>
<dbReference type="NCBIfam" id="NF009686">
    <property type="entry name" value="PRK13207.1"/>
    <property type="match status" value="1"/>
</dbReference>
<dbReference type="NCBIfam" id="TIGR01792">
    <property type="entry name" value="urease_alph"/>
    <property type="match status" value="1"/>
</dbReference>
<dbReference type="PANTHER" id="PTHR43440">
    <property type="entry name" value="UREASE"/>
    <property type="match status" value="1"/>
</dbReference>
<dbReference type="PANTHER" id="PTHR43440:SF1">
    <property type="entry name" value="UREASE"/>
    <property type="match status" value="1"/>
</dbReference>
<dbReference type="Pfam" id="PF01979">
    <property type="entry name" value="Amidohydro_1"/>
    <property type="match status" value="1"/>
</dbReference>
<dbReference type="Pfam" id="PF00449">
    <property type="entry name" value="Urease_alpha"/>
    <property type="match status" value="1"/>
</dbReference>
<dbReference type="PRINTS" id="PR01752">
    <property type="entry name" value="UREASE"/>
</dbReference>
<dbReference type="SUPFAM" id="SSF51338">
    <property type="entry name" value="Composite domain of metallo-dependent hydrolases"/>
    <property type="match status" value="1"/>
</dbReference>
<dbReference type="SUPFAM" id="SSF51556">
    <property type="entry name" value="Metallo-dependent hydrolases"/>
    <property type="match status" value="1"/>
</dbReference>
<dbReference type="PROSITE" id="PS01120">
    <property type="entry name" value="UREASE_1"/>
    <property type="match status" value="1"/>
</dbReference>
<dbReference type="PROSITE" id="PS00145">
    <property type="entry name" value="UREASE_2"/>
    <property type="match status" value="1"/>
</dbReference>
<dbReference type="PROSITE" id="PS51368">
    <property type="entry name" value="UREASE_3"/>
    <property type="match status" value="1"/>
</dbReference>
<name>URE1_STAA9</name>
<accession>A5IV71</accession>